<dbReference type="EMBL" id="AP000410">
    <property type="protein sequence ID" value="BAB01160.1"/>
    <property type="molecule type" value="Genomic_DNA"/>
</dbReference>
<dbReference type="EMBL" id="CP002686">
    <property type="protein sequence ID" value="AEE76389.1"/>
    <property type="molecule type" value="Genomic_DNA"/>
</dbReference>
<dbReference type="EMBL" id="BT010505">
    <property type="protein sequence ID" value="AAQ65128.1"/>
    <property type="molecule type" value="mRNA"/>
</dbReference>
<dbReference type="EMBL" id="AK176567">
    <property type="protein sequence ID" value="BAD44330.1"/>
    <property type="molecule type" value="mRNA"/>
</dbReference>
<dbReference type="EMBL" id="AK176851">
    <property type="protein sequence ID" value="BAD44614.1"/>
    <property type="molecule type" value="mRNA"/>
</dbReference>
<dbReference type="RefSeq" id="NP_188687.1">
    <property type="nucleotide sequence ID" value="NM_112943.5"/>
</dbReference>
<dbReference type="SMR" id="Q9LJU6"/>
<dbReference type="FunCoup" id="Q9LJU6">
    <property type="interactions" value="1879"/>
</dbReference>
<dbReference type="IntAct" id="Q9LJU6">
    <property type="interactions" value="9"/>
</dbReference>
<dbReference type="STRING" id="3702.Q9LJU6"/>
<dbReference type="PaxDb" id="3702-AT3G20510.1"/>
<dbReference type="ProteomicsDB" id="231011"/>
<dbReference type="EnsemblPlants" id="AT3G20510.1">
    <property type="protein sequence ID" value="AT3G20510.1"/>
    <property type="gene ID" value="AT3G20510"/>
</dbReference>
<dbReference type="GeneID" id="821597"/>
<dbReference type="Gramene" id="AT3G20510.1">
    <property type="protein sequence ID" value="AT3G20510.1"/>
    <property type="gene ID" value="AT3G20510"/>
</dbReference>
<dbReference type="KEGG" id="ath:AT3G20510"/>
<dbReference type="Araport" id="AT3G20510"/>
<dbReference type="TAIR" id="AT3G20510">
    <property type="gene designation" value="FAX6"/>
</dbReference>
<dbReference type="eggNOG" id="KOG4267">
    <property type="taxonomic scope" value="Eukaryota"/>
</dbReference>
<dbReference type="HOGENOM" id="CLU_096652_5_0_1"/>
<dbReference type="InParanoid" id="Q9LJU6"/>
<dbReference type="OMA" id="GRINECM"/>
<dbReference type="OrthoDB" id="5620at2759"/>
<dbReference type="PhylomeDB" id="Q9LJU6"/>
<dbReference type="PRO" id="PR:Q9LJU6"/>
<dbReference type="Proteomes" id="UP000006548">
    <property type="component" value="Chromosome 3"/>
</dbReference>
<dbReference type="ExpressionAtlas" id="Q9LJU6">
    <property type="expression patterns" value="baseline and differential"/>
</dbReference>
<dbReference type="GO" id="GO:0005737">
    <property type="term" value="C:cytoplasm"/>
    <property type="evidence" value="ECO:0007005"/>
    <property type="project" value="TAIR"/>
</dbReference>
<dbReference type="GO" id="GO:0012505">
    <property type="term" value="C:endomembrane system"/>
    <property type="evidence" value="ECO:0000304"/>
    <property type="project" value="TAIR"/>
</dbReference>
<dbReference type="GO" id="GO:0016020">
    <property type="term" value="C:membrane"/>
    <property type="evidence" value="ECO:0007669"/>
    <property type="project" value="UniProtKB-SubCell"/>
</dbReference>
<dbReference type="GO" id="GO:0005634">
    <property type="term" value="C:nucleus"/>
    <property type="evidence" value="ECO:0007005"/>
    <property type="project" value="TAIR"/>
</dbReference>
<dbReference type="FunFam" id="1.10.10.1740:FF:000005">
    <property type="entry name" value="BnaCnng46150D protein"/>
    <property type="match status" value="1"/>
</dbReference>
<dbReference type="Gene3D" id="1.10.10.1740">
    <property type="entry name" value="Transmembrane protein 14-like"/>
    <property type="match status" value="1"/>
</dbReference>
<dbReference type="InterPro" id="IPR005349">
    <property type="entry name" value="TMEM14"/>
</dbReference>
<dbReference type="InterPro" id="IPR044890">
    <property type="entry name" value="TMEM14_sf"/>
</dbReference>
<dbReference type="PANTHER" id="PTHR12668:SF5">
    <property type="entry name" value="PROTEIN FATTY ACID EXPORT 5-RELATED"/>
    <property type="match status" value="1"/>
</dbReference>
<dbReference type="PANTHER" id="PTHR12668">
    <property type="entry name" value="TRANSMEMBRANE PROTEIN 14, 15"/>
    <property type="match status" value="1"/>
</dbReference>
<dbReference type="Pfam" id="PF03647">
    <property type="entry name" value="Tmemb_14"/>
    <property type="match status" value="1"/>
</dbReference>
<sequence>MHDFCFTIPYGMLLIGGGFIGYMKKGSITSFAGGAGTGLLLILAGYISLKAFEKKKNSTIAMVLQTVIAAALTLVMGQRYLLTGKIMPAGLVAGISALMTCFYVYKIATGGNKFPAKAE</sequence>
<organism evidence="8">
    <name type="scientific">Arabidopsis thaliana</name>
    <name type="common">Mouse-ear cress</name>
    <dbReference type="NCBI Taxonomy" id="3702"/>
    <lineage>
        <taxon>Eukaryota</taxon>
        <taxon>Viridiplantae</taxon>
        <taxon>Streptophyta</taxon>
        <taxon>Embryophyta</taxon>
        <taxon>Tracheophyta</taxon>
        <taxon>Spermatophyta</taxon>
        <taxon>Magnoliopsida</taxon>
        <taxon>eudicotyledons</taxon>
        <taxon>Gunneridae</taxon>
        <taxon>Pentapetalae</taxon>
        <taxon>rosids</taxon>
        <taxon>malvids</taxon>
        <taxon>Brassicales</taxon>
        <taxon>Brassicaceae</taxon>
        <taxon>Camelineae</taxon>
        <taxon>Arabidopsis</taxon>
    </lineage>
</organism>
<keyword id="KW-0472">Membrane</keyword>
<keyword id="KW-1185">Reference proteome</keyword>
<keyword id="KW-0812">Transmembrane</keyword>
<keyword id="KW-1133">Transmembrane helix</keyword>
<evidence type="ECO:0000250" key="1">
    <source>
        <dbReference type="UniProtKB" id="Q93V66"/>
    </source>
</evidence>
<evidence type="ECO:0000255" key="2"/>
<evidence type="ECO:0000303" key="3">
    <source>
    </source>
</evidence>
<evidence type="ECO:0000305" key="4"/>
<evidence type="ECO:0000305" key="5">
    <source>
    </source>
</evidence>
<evidence type="ECO:0000312" key="6">
    <source>
        <dbReference type="Araport" id="AT3G20510"/>
    </source>
</evidence>
<evidence type="ECO:0000312" key="7">
    <source>
        <dbReference type="EMBL" id="BAB01160.1"/>
    </source>
</evidence>
<evidence type="ECO:0000312" key="8">
    <source>
        <dbReference type="Proteomes" id="UP000006548"/>
    </source>
</evidence>
<gene>
    <name evidence="3" type="primary">FAX6</name>
    <name evidence="6" type="ordered locus">At3g20510</name>
    <name evidence="7" type="ORF">K10D20.5</name>
</gene>
<protein>
    <recommendedName>
        <fullName evidence="3">Protein FATTY ACID EXPORT 6</fullName>
        <shortName evidence="3">At-FAX6</shortName>
    </recommendedName>
</protein>
<name>FAX6_ARATH</name>
<comment type="function">
    <text evidence="1">May be involved in free fatty acids export.</text>
</comment>
<comment type="subcellular location">
    <subcellularLocation>
        <location evidence="4">Membrane</location>
        <topology evidence="4">Multi-pass membrane protein</topology>
    </subcellularLocation>
</comment>
<comment type="miscellaneous">
    <text evidence="5">For all TMEM14 proteins, 4 hydrophobic alpha-helical domains are predicted. However, NMR structure determination of the human TMEM14A showed that only 3 of these helices are membrane-spaning while the amphiphilic N-terminal helix is probably located at the lipid micelle-water interface.</text>
</comment>
<comment type="similarity">
    <text evidence="4">Belongs to the TMEM14 family.</text>
</comment>
<accession>Q9LJU6</accession>
<reference key="1">
    <citation type="journal article" date="2000" name="DNA Res.">
        <title>Structural analysis of Arabidopsis thaliana chromosome 3. II. Sequence features of the 4,251,695 bp regions covered by 90 P1, TAC and BAC clones.</title>
        <authorList>
            <person name="Kaneko T."/>
            <person name="Katoh T."/>
            <person name="Sato S."/>
            <person name="Nakamura Y."/>
            <person name="Asamizu E."/>
            <person name="Tabata S."/>
        </authorList>
    </citation>
    <scope>NUCLEOTIDE SEQUENCE [LARGE SCALE GENOMIC DNA]</scope>
    <source>
        <strain>cv. Columbia</strain>
    </source>
</reference>
<reference key="2">
    <citation type="journal article" date="2017" name="Plant J.">
        <title>Araport11: a complete reannotation of the Arabidopsis thaliana reference genome.</title>
        <authorList>
            <person name="Cheng C.Y."/>
            <person name="Krishnakumar V."/>
            <person name="Chan A.P."/>
            <person name="Thibaud-Nissen F."/>
            <person name="Schobel S."/>
            <person name="Town C.D."/>
        </authorList>
    </citation>
    <scope>GENOME REANNOTATION</scope>
    <source>
        <strain>cv. Columbia</strain>
    </source>
</reference>
<reference key="3">
    <citation type="journal article" date="2003" name="Science">
        <title>Empirical analysis of transcriptional activity in the Arabidopsis genome.</title>
        <authorList>
            <person name="Yamada K."/>
            <person name="Lim J."/>
            <person name="Dale J.M."/>
            <person name="Chen H."/>
            <person name="Shinn P."/>
            <person name="Palm C.J."/>
            <person name="Southwick A.M."/>
            <person name="Wu H.C."/>
            <person name="Kim C.J."/>
            <person name="Nguyen M."/>
            <person name="Pham P.K."/>
            <person name="Cheuk R.F."/>
            <person name="Karlin-Newmann G."/>
            <person name="Liu S.X."/>
            <person name="Lam B."/>
            <person name="Sakano H."/>
            <person name="Wu T."/>
            <person name="Yu G."/>
            <person name="Miranda M."/>
            <person name="Quach H.L."/>
            <person name="Tripp M."/>
            <person name="Chang C.H."/>
            <person name="Lee J.M."/>
            <person name="Toriumi M.J."/>
            <person name="Chan M.M."/>
            <person name="Tang C.C."/>
            <person name="Onodera C.S."/>
            <person name="Deng J.M."/>
            <person name="Akiyama K."/>
            <person name="Ansari Y."/>
            <person name="Arakawa T."/>
            <person name="Banh J."/>
            <person name="Banno F."/>
            <person name="Bowser L."/>
            <person name="Brooks S.Y."/>
            <person name="Carninci P."/>
            <person name="Chao Q."/>
            <person name="Choy N."/>
            <person name="Enju A."/>
            <person name="Goldsmith A.D."/>
            <person name="Gurjal M."/>
            <person name="Hansen N.F."/>
            <person name="Hayashizaki Y."/>
            <person name="Johnson-Hopson C."/>
            <person name="Hsuan V.W."/>
            <person name="Iida K."/>
            <person name="Karnes M."/>
            <person name="Khan S."/>
            <person name="Koesema E."/>
            <person name="Ishida J."/>
            <person name="Jiang P.X."/>
            <person name="Jones T."/>
            <person name="Kawai J."/>
            <person name="Kamiya A."/>
            <person name="Meyers C."/>
            <person name="Nakajima M."/>
            <person name="Narusaka M."/>
            <person name="Seki M."/>
            <person name="Sakurai T."/>
            <person name="Satou M."/>
            <person name="Tamse R."/>
            <person name="Vaysberg M."/>
            <person name="Wallender E.K."/>
            <person name="Wong C."/>
            <person name="Yamamura Y."/>
            <person name="Yuan S."/>
            <person name="Shinozaki K."/>
            <person name="Davis R.W."/>
            <person name="Theologis A."/>
            <person name="Ecker J.R."/>
        </authorList>
    </citation>
    <scope>NUCLEOTIDE SEQUENCE [LARGE SCALE MRNA]</scope>
    <source>
        <strain>cv. Columbia</strain>
    </source>
</reference>
<reference key="4">
    <citation type="submission" date="2004-09" db="EMBL/GenBank/DDBJ databases">
        <title>Large-scale analysis of RIKEN Arabidopsis full-length (RAFL) cDNAs.</title>
        <authorList>
            <person name="Totoki Y."/>
            <person name="Seki M."/>
            <person name="Ishida J."/>
            <person name="Nakajima M."/>
            <person name="Enju A."/>
            <person name="Kamiya A."/>
            <person name="Narusaka M."/>
            <person name="Shin-i T."/>
            <person name="Nakagawa M."/>
            <person name="Sakamoto N."/>
            <person name="Oishi K."/>
            <person name="Kohara Y."/>
            <person name="Kobayashi M."/>
            <person name="Toyoda A."/>
            <person name="Sakaki Y."/>
            <person name="Sakurai T."/>
            <person name="Iida K."/>
            <person name="Akiyama K."/>
            <person name="Satou M."/>
            <person name="Toyoda T."/>
            <person name="Konagaya A."/>
            <person name="Carninci P."/>
            <person name="Kawai J."/>
            <person name="Hayashizaki Y."/>
            <person name="Shinozaki K."/>
        </authorList>
    </citation>
    <scope>NUCLEOTIDE SEQUENCE [LARGE SCALE MRNA]</scope>
    <source>
        <strain>cv. Columbia</strain>
    </source>
</reference>
<reference key="5">
    <citation type="journal article" date="2015" name="PLoS Biol.">
        <title>FAX1, a novel membrane protein mediating plastid fatty acid export.</title>
        <authorList>
            <person name="Li N."/>
            <person name="Guegel I.L."/>
            <person name="Giavalisco P."/>
            <person name="Zeisler V."/>
            <person name="Schreiber L."/>
            <person name="Soll J."/>
            <person name="Philippar K."/>
        </authorList>
    </citation>
    <scope>GENE FAMILY</scope>
    <scope>NOMENCLATURE</scope>
    <scope>3D-STRUCTURE MODELING</scope>
</reference>
<proteinExistence type="inferred from homology"/>
<feature type="chain" id="PRO_0000432806" description="Protein FATTY ACID EXPORT 6">
    <location>
        <begin position="1"/>
        <end position="119"/>
    </location>
</feature>
<feature type="transmembrane region" description="Helical; Name=1" evidence="2">
    <location>
        <begin position="27"/>
        <end position="47"/>
    </location>
</feature>
<feature type="transmembrane region" description="Helical; Name=2" evidence="2">
    <location>
        <begin position="57"/>
        <end position="77"/>
    </location>
</feature>
<feature type="transmembrane region" description="Helical; Name=3" evidence="2">
    <location>
        <begin position="84"/>
        <end position="104"/>
    </location>
</feature>